<keyword id="KW-0456">Lyase</keyword>
<proteinExistence type="inferred from homology"/>
<comment type="function">
    <text evidence="1">Catalyzes the formation of methylglyoxal from dihydroxyacetone phosphate.</text>
</comment>
<comment type="catalytic activity">
    <reaction evidence="1">
        <text>dihydroxyacetone phosphate = methylglyoxal + phosphate</text>
        <dbReference type="Rhea" id="RHEA:17937"/>
        <dbReference type="ChEBI" id="CHEBI:17158"/>
        <dbReference type="ChEBI" id="CHEBI:43474"/>
        <dbReference type="ChEBI" id="CHEBI:57642"/>
        <dbReference type="EC" id="4.2.3.3"/>
    </reaction>
</comment>
<comment type="similarity">
    <text evidence="1">Belongs to the methylglyoxal synthase family.</text>
</comment>
<sequence length="152" mass="16962">MELTTRTIAARKHIALVSHDHCKKSLLEWVMQNRDLLSQHELYATGTTGNLVQKATGIDVHCLLSGPMGGDQEVGALISEKKIDILIFFWDPLNAVPHDPDVKALLRLATVWNIPVATNRSTADFLIDSALFSGEVTIAIPNYDRYLQQRLK</sequence>
<accession>A1JMV3</accession>
<evidence type="ECO:0000255" key="1">
    <source>
        <dbReference type="HAMAP-Rule" id="MF_00549"/>
    </source>
</evidence>
<protein>
    <recommendedName>
        <fullName evidence="1">Methylglyoxal synthase</fullName>
        <shortName evidence="1">MGS</shortName>
        <ecNumber evidence="1">4.2.3.3</ecNumber>
    </recommendedName>
</protein>
<gene>
    <name evidence="1" type="primary">mgsA</name>
    <name type="ordered locus">YE1587</name>
</gene>
<dbReference type="EC" id="4.2.3.3" evidence="1"/>
<dbReference type="EMBL" id="AM286415">
    <property type="protein sequence ID" value="CAL11664.1"/>
    <property type="molecule type" value="Genomic_DNA"/>
</dbReference>
<dbReference type="RefSeq" id="WP_011816056.1">
    <property type="nucleotide sequence ID" value="NC_008800.1"/>
</dbReference>
<dbReference type="RefSeq" id="YP_001005880.1">
    <property type="nucleotide sequence ID" value="NC_008800.1"/>
</dbReference>
<dbReference type="SMR" id="A1JMV3"/>
<dbReference type="KEGG" id="yen:YE1587"/>
<dbReference type="PATRIC" id="fig|393305.7.peg.1716"/>
<dbReference type="eggNOG" id="COG1803">
    <property type="taxonomic scope" value="Bacteria"/>
</dbReference>
<dbReference type="HOGENOM" id="CLU_120420_0_1_6"/>
<dbReference type="OrthoDB" id="9787147at2"/>
<dbReference type="Proteomes" id="UP000000642">
    <property type="component" value="Chromosome"/>
</dbReference>
<dbReference type="GO" id="GO:0005829">
    <property type="term" value="C:cytosol"/>
    <property type="evidence" value="ECO:0007669"/>
    <property type="project" value="TreeGrafter"/>
</dbReference>
<dbReference type="GO" id="GO:0008929">
    <property type="term" value="F:methylglyoxal synthase activity"/>
    <property type="evidence" value="ECO:0007669"/>
    <property type="project" value="UniProtKB-UniRule"/>
</dbReference>
<dbReference type="GO" id="GO:0019242">
    <property type="term" value="P:methylglyoxal biosynthetic process"/>
    <property type="evidence" value="ECO:0007669"/>
    <property type="project" value="UniProtKB-UniRule"/>
</dbReference>
<dbReference type="CDD" id="cd01422">
    <property type="entry name" value="MGS"/>
    <property type="match status" value="1"/>
</dbReference>
<dbReference type="FunFam" id="3.40.50.1380:FF:000002">
    <property type="entry name" value="Methylglyoxal synthase"/>
    <property type="match status" value="1"/>
</dbReference>
<dbReference type="Gene3D" id="3.40.50.1380">
    <property type="entry name" value="Methylglyoxal synthase-like domain"/>
    <property type="match status" value="1"/>
</dbReference>
<dbReference type="HAMAP" id="MF_00549">
    <property type="entry name" value="Methylglyoxal_synth"/>
    <property type="match status" value="1"/>
</dbReference>
<dbReference type="InterPro" id="IPR004363">
    <property type="entry name" value="Methylgl_synth"/>
</dbReference>
<dbReference type="InterPro" id="IPR018148">
    <property type="entry name" value="Methylglyoxal_synth_AS"/>
</dbReference>
<dbReference type="InterPro" id="IPR011607">
    <property type="entry name" value="MGS-like_dom"/>
</dbReference>
<dbReference type="InterPro" id="IPR036914">
    <property type="entry name" value="MGS-like_dom_sf"/>
</dbReference>
<dbReference type="NCBIfam" id="TIGR00160">
    <property type="entry name" value="MGSA"/>
    <property type="match status" value="1"/>
</dbReference>
<dbReference type="NCBIfam" id="NF003559">
    <property type="entry name" value="PRK05234.1"/>
    <property type="match status" value="1"/>
</dbReference>
<dbReference type="PANTHER" id="PTHR30492">
    <property type="entry name" value="METHYLGLYOXAL SYNTHASE"/>
    <property type="match status" value="1"/>
</dbReference>
<dbReference type="PANTHER" id="PTHR30492:SF0">
    <property type="entry name" value="METHYLGLYOXAL SYNTHASE"/>
    <property type="match status" value="1"/>
</dbReference>
<dbReference type="Pfam" id="PF02142">
    <property type="entry name" value="MGS"/>
    <property type="match status" value="1"/>
</dbReference>
<dbReference type="PIRSF" id="PIRSF006614">
    <property type="entry name" value="Methylglyox_syn"/>
    <property type="match status" value="1"/>
</dbReference>
<dbReference type="SMART" id="SM00851">
    <property type="entry name" value="MGS"/>
    <property type="match status" value="1"/>
</dbReference>
<dbReference type="SUPFAM" id="SSF52335">
    <property type="entry name" value="Methylglyoxal synthase-like"/>
    <property type="match status" value="1"/>
</dbReference>
<dbReference type="PROSITE" id="PS01335">
    <property type="entry name" value="METHYLGLYOXAL_SYNTH"/>
    <property type="match status" value="1"/>
</dbReference>
<dbReference type="PROSITE" id="PS51855">
    <property type="entry name" value="MGS"/>
    <property type="match status" value="1"/>
</dbReference>
<feature type="chain" id="PRO_1000017833" description="Methylglyoxal synthase">
    <location>
        <begin position="1"/>
        <end position="152"/>
    </location>
</feature>
<feature type="domain" description="MGS-like" evidence="1">
    <location>
        <begin position="1"/>
        <end position="152"/>
    </location>
</feature>
<feature type="active site" description="Proton donor/acceptor" evidence="1">
    <location>
        <position position="71"/>
    </location>
</feature>
<feature type="binding site" evidence="1">
    <location>
        <position position="19"/>
    </location>
    <ligand>
        <name>substrate</name>
    </ligand>
</feature>
<feature type="binding site" evidence="1">
    <location>
        <position position="23"/>
    </location>
    <ligand>
        <name>substrate</name>
    </ligand>
</feature>
<feature type="binding site" evidence="1">
    <location>
        <begin position="45"/>
        <end position="48"/>
    </location>
    <ligand>
        <name>substrate</name>
    </ligand>
</feature>
<feature type="binding site" evidence="1">
    <location>
        <begin position="65"/>
        <end position="66"/>
    </location>
    <ligand>
        <name>substrate</name>
    </ligand>
</feature>
<feature type="binding site" evidence="1">
    <location>
        <position position="98"/>
    </location>
    <ligand>
        <name>substrate</name>
    </ligand>
</feature>
<name>MGSA_YERE8</name>
<organism>
    <name type="scientific">Yersinia enterocolitica serotype O:8 / biotype 1B (strain NCTC 13174 / 8081)</name>
    <dbReference type="NCBI Taxonomy" id="393305"/>
    <lineage>
        <taxon>Bacteria</taxon>
        <taxon>Pseudomonadati</taxon>
        <taxon>Pseudomonadota</taxon>
        <taxon>Gammaproteobacteria</taxon>
        <taxon>Enterobacterales</taxon>
        <taxon>Yersiniaceae</taxon>
        <taxon>Yersinia</taxon>
    </lineage>
</organism>
<reference key="1">
    <citation type="journal article" date="2006" name="PLoS Genet.">
        <title>The complete genome sequence and comparative genome analysis of the high pathogenicity Yersinia enterocolitica strain 8081.</title>
        <authorList>
            <person name="Thomson N.R."/>
            <person name="Howard S."/>
            <person name="Wren B.W."/>
            <person name="Holden M.T.G."/>
            <person name="Crossman L."/>
            <person name="Challis G.L."/>
            <person name="Churcher C."/>
            <person name="Mungall K."/>
            <person name="Brooks K."/>
            <person name="Chillingworth T."/>
            <person name="Feltwell T."/>
            <person name="Abdellah Z."/>
            <person name="Hauser H."/>
            <person name="Jagels K."/>
            <person name="Maddison M."/>
            <person name="Moule S."/>
            <person name="Sanders M."/>
            <person name="Whitehead S."/>
            <person name="Quail M.A."/>
            <person name="Dougan G."/>
            <person name="Parkhill J."/>
            <person name="Prentice M.B."/>
        </authorList>
    </citation>
    <scope>NUCLEOTIDE SEQUENCE [LARGE SCALE GENOMIC DNA]</scope>
    <source>
        <strain>NCTC 13174 / 8081</strain>
    </source>
</reference>